<comment type="function">
    <text evidence="1">Attaches a formyl group to the free amino group of methionyl-tRNA(fMet). The formyl group appears to play a dual role in the initiator identity of N-formylmethionyl-tRNA by promoting its recognition by IF2 and preventing the misappropriation of this tRNA by the elongation apparatus.</text>
</comment>
<comment type="catalytic activity">
    <reaction evidence="1">
        <text>L-methionyl-tRNA(fMet) + (6R)-10-formyltetrahydrofolate = N-formyl-L-methionyl-tRNA(fMet) + (6S)-5,6,7,8-tetrahydrofolate + H(+)</text>
        <dbReference type="Rhea" id="RHEA:24380"/>
        <dbReference type="Rhea" id="RHEA-COMP:9952"/>
        <dbReference type="Rhea" id="RHEA-COMP:9953"/>
        <dbReference type="ChEBI" id="CHEBI:15378"/>
        <dbReference type="ChEBI" id="CHEBI:57453"/>
        <dbReference type="ChEBI" id="CHEBI:78530"/>
        <dbReference type="ChEBI" id="CHEBI:78844"/>
        <dbReference type="ChEBI" id="CHEBI:195366"/>
        <dbReference type="EC" id="2.1.2.9"/>
    </reaction>
</comment>
<comment type="similarity">
    <text evidence="1">Belongs to the Fmt family.</text>
</comment>
<keyword id="KW-0648">Protein biosynthesis</keyword>
<keyword id="KW-1185">Reference proteome</keyword>
<keyword id="KW-0808">Transferase</keyword>
<proteinExistence type="inferred from homology"/>
<feature type="chain" id="PRO_1000020127" description="Methionyl-tRNA formyltransferase">
    <location>
        <begin position="1"/>
        <end position="336"/>
    </location>
</feature>
<feature type="binding site" evidence="1">
    <location>
        <begin position="110"/>
        <end position="113"/>
    </location>
    <ligand>
        <name>(6S)-5,6,7,8-tetrahydrofolate</name>
        <dbReference type="ChEBI" id="CHEBI:57453"/>
    </ligand>
</feature>
<protein>
    <recommendedName>
        <fullName evidence="1">Methionyl-tRNA formyltransferase</fullName>
        <ecNumber evidence="1">2.1.2.9</ecNumber>
    </recommendedName>
</protein>
<sequence length="336" mass="37542">MKIVFWGTPKYAAENLKTIAKAGYEVIAVVTQPDRKRGRGKKLSPSPVKEAAEELSIPVYATNSISKDQKTKEILLNLKADVYLVVAFGQILPKEILDQPKLGCWNSHASLLPVWRGAAPIQWSIINADAKTGICIMSMEEGLDTGPVIEQESTVIKDSDNLEILTNRLSVMSSKLLLKSLEKIKLTKGLNKSSRLKQLNAIEQRNLNGIPSYARQITKEDNLIDWNQDARKILKKIQGLYPNAYTLYNGKRIKILDAIISCDNNQSKESQDIKNQSKSNRIPGEIFMINKQIGIKIMTNDFPVLIKYAQLEGKKATDSYTLSIQSNLSINDKLGI</sequence>
<organism>
    <name type="scientific">Prochlorococcus marinus (strain NATL2A)</name>
    <dbReference type="NCBI Taxonomy" id="59920"/>
    <lineage>
        <taxon>Bacteria</taxon>
        <taxon>Bacillati</taxon>
        <taxon>Cyanobacteriota</taxon>
        <taxon>Cyanophyceae</taxon>
        <taxon>Synechococcales</taxon>
        <taxon>Prochlorococcaceae</taxon>
        <taxon>Prochlorococcus</taxon>
    </lineage>
</organism>
<dbReference type="EC" id="2.1.2.9" evidence="1"/>
<dbReference type="EMBL" id="CP000095">
    <property type="protein sequence ID" value="AAZ57858.1"/>
    <property type="molecule type" value="Genomic_DNA"/>
</dbReference>
<dbReference type="RefSeq" id="WP_011293900.1">
    <property type="nucleotide sequence ID" value="NC_007335.2"/>
</dbReference>
<dbReference type="SMR" id="Q46KX0"/>
<dbReference type="STRING" id="59920.PMN2A_0366"/>
<dbReference type="KEGG" id="pmn:PMN2A_0366"/>
<dbReference type="HOGENOM" id="CLU_033347_1_1_3"/>
<dbReference type="OrthoDB" id="9802815at2"/>
<dbReference type="PhylomeDB" id="Q46KX0"/>
<dbReference type="Proteomes" id="UP000002535">
    <property type="component" value="Chromosome"/>
</dbReference>
<dbReference type="GO" id="GO:0005829">
    <property type="term" value="C:cytosol"/>
    <property type="evidence" value="ECO:0007669"/>
    <property type="project" value="TreeGrafter"/>
</dbReference>
<dbReference type="GO" id="GO:0004479">
    <property type="term" value="F:methionyl-tRNA formyltransferase activity"/>
    <property type="evidence" value="ECO:0007669"/>
    <property type="project" value="UniProtKB-UniRule"/>
</dbReference>
<dbReference type="CDD" id="cd08646">
    <property type="entry name" value="FMT_core_Met-tRNA-FMT_N"/>
    <property type="match status" value="1"/>
</dbReference>
<dbReference type="CDD" id="cd08704">
    <property type="entry name" value="Met_tRNA_FMT_C"/>
    <property type="match status" value="1"/>
</dbReference>
<dbReference type="Gene3D" id="3.40.50.12230">
    <property type="match status" value="1"/>
</dbReference>
<dbReference type="HAMAP" id="MF_00182">
    <property type="entry name" value="Formyl_trans"/>
    <property type="match status" value="1"/>
</dbReference>
<dbReference type="InterPro" id="IPR005794">
    <property type="entry name" value="Fmt"/>
</dbReference>
<dbReference type="InterPro" id="IPR005793">
    <property type="entry name" value="Formyl_trans_C"/>
</dbReference>
<dbReference type="InterPro" id="IPR002376">
    <property type="entry name" value="Formyl_transf_N"/>
</dbReference>
<dbReference type="InterPro" id="IPR036477">
    <property type="entry name" value="Formyl_transf_N_sf"/>
</dbReference>
<dbReference type="InterPro" id="IPR011034">
    <property type="entry name" value="Formyl_transferase-like_C_sf"/>
</dbReference>
<dbReference type="InterPro" id="IPR044135">
    <property type="entry name" value="Met-tRNA-FMT_C"/>
</dbReference>
<dbReference type="InterPro" id="IPR041711">
    <property type="entry name" value="Met-tRNA-FMT_N"/>
</dbReference>
<dbReference type="NCBIfam" id="TIGR00460">
    <property type="entry name" value="fmt"/>
    <property type="match status" value="1"/>
</dbReference>
<dbReference type="PANTHER" id="PTHR11138">
    <property type="entry name" value="METHIONYL-TRNA FORMYLTRANSFERASE"/>
    <property type="match status" value="1"/>
</dbReference>
<dbReference type="PANTHER" id="PTHR11138:SF5">
    <property type="entry name" value="METHIONYL-TRNA FORMYLTRANSFERASE, MITOCHONDRIAL"/>
    <property type="match status" value="1"/>
</dbReference>
<dbReference type="Pfam" id="PF02911">
    <property type="entry name" value="Formyl_trans_C"/>
    <property type="match status" value="1"/>
</dbReference>
<dbReference type="Pfam" id="PF00551">
    <property type="entry name" value="Formyl_trans_N"/>
    <property type="match status" value="1"/>
</dbReference>
<dbReference type="SUPFAM" id="SSF50486">
    <property type="entry name" value="FMT C-terminal domain-like"/>
    <property type="match status" value="1"/>
</dbReference>
<dbReference type="SUPFAM" id="SSF53328">
    <property type="entry name" value="Formyltransferase"/>
    <property type="match status" value="1"/>
</dbReference>
<gene>
    <name evidence="1" type="primary">fmt</name>
    <name type="ordered locus">PMN2A_0366</name>
</gene>
<reference key="1">
    <citation type="journal article" date="2007" name="PLoS Genet.">
        <title>Patterns and implications of gene gain and loss in the evolution of Prochlorococcus.</title>
        <authorList>
            <person name="Kettler G.C."/>
            <person name="Martiny A.C."/>
            <person name="Huang K."/>
            <person name="Zucker J."/>
            <person name="Coleman M.L."/>
            <person name="Rodrigue S."/>
            <person name="Chen F."/>
            <person name="Lapidus A."/>
            <person name="Ferriera S."/>
            <person name="Johnson J."/>
            <person name="Steglich C."/>
            <person name="Church G.M."/>
            <person name="Richardson P."/>
            <person name="Chisholm S.W."/>
        </authorList>
    </citation>
    <scope>NUCLEOTIDE SEQUENCE [LARGE SCALE GENOMIC DNA]</scope>
    <source>
        <strain>NATL2A</strain>
    </source>
</reference>
<accession>Q46KX0</accession>
<evidence type="ECO:0000255" key="1">
    <source>
        <dbReference type="HAMAP-Rule" id="MF_00182"/>
    </source>
</evidence>
<name>FMT_PROMT</name>